<proteinExistence type="evidence at transcript level"/>
<dbReference type="EMBL" id="Z68300">
    <property type="protein sequence ID" value="CAA92616.2"/>
    <property type="molecule type" value="Genomic_DNA"/>
</dbReference>
<dbReference type="EMBL" id="U01918">
    <property type="protein sequence ID" value="AAA85278.1"/>
    <property type="status" value="ALT_SEQ"/>
    <property type="molecule type" value="Genomic_DNA"/>
</dbReference>
<dbReference type="PIR" id="T25097">
    <property type="entry name" value="T25097"/>
</dbReference>
<dbReference type="RefSeq" id="NP_502215.2">
    <property type="nucleotide sequence ID" value="NM_069814.6"/>
</dbReference>
<dbReference type="FunCoup" id="P34807">
    <property type="interactions" value="1271"/>
</dbReference>
<dbReference type="STRING" id="6239.T22B3.1.1"/>
<dbReference type="PaxDb" id="6239-T22B3.1"/>
<dbReference type="EnsemblMetazoa" id="T22B3.1.1">
    <property type="protein sequence ID" value="T22B3.1.1"/>
    <property type="gene ID" value="WBGene00001079"/>
</dbReference>
<dbReference type="GeneID" id="178105"/>
<dbReference type="KEGG" id="cel:CELE_T22B3.1"/>
<dbReference type="UCSC" id="T22B3.1">
    <property type="organism name" value="c. elegans"/>
</dbReference>
<dbReference type="AGR" id="WB:WBGene00001079"/>
<dbReference type="CTD" id="178105"/>
<dbReference type="WormBase" id="T22B3.1">
    <property type="protein sequence ID" value="CE40520"/>
    <property type="gene ID" value="WBGene00001079"/>
    <property type="gene designation" value="dpy-20"/>
</dbReference>
<dbReference type="eggNOG" id="ENOG502TGV1">
    <property type="taxonomic scope" value="Eukaryota"/>
</dbReference>
<dbReference type="HOGENOM" id="CLU_681947_0_0_1"/>
<dbReference type="InParanoid" id="P34807"/>
<dbReference type="OMA" id="THPGIHC"/>
<dbReference type="OrthoDB" id="5871196at2759"/>
<dbReference type="PRO" id="PR:P34807"/>
<dbReference type="Proteomes" id="UP000001940">
    <property type="component" value="Chromosome IV"/>
</dbReference>
<dbReference type="Bgee" id="WBGene00001079">
    <property type="expression patterns" value="Expressed in larva"/>
</dbReference>
<dbReference type="GO" id="GO:0005634">
    <property type="term" value="C:nucleus"/>
    <property type="evidence" value="ECO:0000318"/>
    <property type="project" value="GO_Central"/>
</dbReference>
<dbReference type="GO" id="GO:1990837">
    <property type="term" value="F:sequence-specific double-stranded DNA binding"/>
    <property type="evidence" value="ECO:0007005"/>
    <property type="project" value="WormBase"/>
</dbReference>
<dbReference type="GO" id="GO:0008270">
    <property type="term" value="F:zinc ion binding"/>
    <property type="evidence" value="ECO:0007669"/>
    <property type="project" value="UniProtKB-KW"/>
</dbReference>
<dbReference type="GO" id="GO:0006357">
    <property type="term" value="P:regulation of transcription by RNA polymerase II"/>
    <property type="evidence" value="ECO:0000318"/>
    <property type="project" value="GO_Central"/>
</dbReference>
<dbReference type="InterPro" id="IPR053031">
    <property type="entry name" value="Cuticle_assoc_protein"/>
</dbReference>
<dbReference type="InterPro" id="IPR003656">
    <property type="entry name" value="Znf_BED"/>
</dbReference>
<dbReference type="InterPro" id="IPR036236">
    <property type="entry name" value="Znf_C2H2_sf"/>
</dbReference>
<dbReference type="PANTHER" id="PTHR34396:SF25">
    <property type="entry name" value="BOUNDARY ELEMENT ASSOCIATED FACTOR"/>
    <property type="match status" value="1"/>
</dbReference>
<dbReference type="PANTHER" id="PTHR34396">
    <property type="entry name" value="OS03G0264950 PROTEIN-RELATED"/>
    <property type="match status" value="1"/>
</dbReference>
<dbReference type="Pfam" id="PF02892">
    <property type="entry name" value="zf-BED"/>
    <property type="match status" value="2"/>
</dbReference>
<dbReference type="SMART" id="SM00614">
    <property type="entry name" value="ZnF_BED"/>
    <property type="match status" value="2"/>
</dbReference>
<dbReference type="SUPFAM" id="SSF57667">
    <property type="entry name" value="beta-beta-alpha zinc fingers"/>
    <property type="match status" value="2"/>
</dbReference>
<dbReference type="PROSITE" id="PS50808">
    <property type="entry name" value="ZF_BED"/>
    <property type="match status" value="2"/>
</dbReference>
<organism>
    <name type="scientific">Caenorhabditis elegans</name>
    <dbReference type="NCBI Taxonomy" id="6239"/>
    <lineage>
        <taxon>Eukaryota</taxon>
        <taxon>Metazoa</taxon>
        <taxon>Ecdysozoa</taxon>
        <taxon>Nematoda</taxon>
        <taxon>Chromadorea</taxon>
        <taxon>Rhabditida</taxon>
        <taxon>Rhabditina</taxon>
        <taxon>Rhabditomorpha</taxon>
        <taxon>Rhabditoidea</taxon>
        <taxon>Rhabditidae</taxon>
        <taxon>Peloderinae</taxon>
        <taxon>Caenorhabditis</taxon>
    </lineage>
</organism>
<name>DPY20_CAEEL</name>
<protein>
    <recommendedName>
        <fullName>Protein dumpy-20</fullName>
    </recommendedName>
</protein>
<comment type="function">
    <text evidence="3">May be directly or indirectly involved in cuticle function.</text>
</comment>
<comment type="developmental stage">
    <text evidence="3">Expressed predominantly in the second larval stage.</text>
</comment>
<comment type="sequence caution" evidence="4">
    <conflict type="erroneous gene model prediction">
        <sequence resource="EMBL-CDS" id="AAA85278"/>
    </conflict>
</comment>
<evidence type="ECO:0000255" key="1">
    <source>
        <dbReference type="PROSITE-ProRule" id="PRU00027"/>
    </source>
</evidence>
<evidence type="ECO:0000256" key="2">
    <source>
        <dbReference type="SAM" id="MobiDB-lite"/>
    </source>
</evidence>
<evidence type="ECO:0000269" key="3">
    <source>
    </source>
</evidence>
<evidence type="ECO:0000305" key="4"/>
<feature type="chain" id="PRO_0000079995" description="Protein dumpy-20">
    <location>
        <begin position="1"/>
        <end position="440"/>
    </location>
</feature>
<feature type="zinc finger region" description="BED-type 1" evidence="1">
    <location>
        <begin position="137"/>
        <end position="186"/>
    </location>
</feature>
<feature type="zinc finger region" description="BED-type 2" evidence="1">
    <location>
        <begin position="350"/>
        <end position="399"/>
    </location>
</feature>
<feature type="region of interest" description="Disordered" evidence="2">
    <location>
        <begin position="96"/>
        <end position="119"/>
    </location>
</feature>
<feature type="compositionally biased region" description="Low complexity" evidence="2">
    <location>
        <begin position="98"/>
        <end position="119"/>
    </location>
</feature>
<feature type="binding site" evidence="1">
    <location>
        <position position="156"/>
    </location>
    <ligand>
        <name>Zn(2+)</name>
        <dbReference type="ChEBI" id="CHEBI:29105"/>
        <label>1</label>
    </ligand>
</feature>
<feature type="binding site" evidence="1">
    <location>
        <position position="159"/>
    </location>
    <ligand>
        <name>Zn(2+)</name>
        <dbReference type="ChEBI" id="CHEBI:29105"/>
        <label>1</label>
    </ligand>
</feature>
<feature type="binding site" evidence="1">
    <location>
        <position position="174"/>
    </location>
    <ligand>
        <name>Zn(2+)</name>
        <dbReference type="ChEBI" id="CHEBI:29105"/>
        <label>1</label>
    </ligand>
</feature>
<feature type="binding site" evidence="1">
    <location>
        <position position="179"/>
    </location>
    <ligand>
        <name>Zn(2+)</name>
        <dbReference type="ChEBI" id="CHEBI:29105"/>
        <label>1</label>
    </ligand>
</feature>
<feature type="binding site" evidence="1">
    <location>
        <position position="369"/>
    </location>
    <ligand>
        <name>Zn(2+)</name>
        <dbReference type="ChEBI" id="CHEBI:29105"/>
        <label>2</label>
    </ligand>
</feature>
<feature type="binding site" evidence="1">
    <location>
        <position position="372"/>
    </location>
    <ligand>
        <name>Zn(2+)</name>
        <dbReference type="ChEBI" id="CHEBI:29105"/>
        <label>2</label>
    </ligand>
</feature>
<feature type="binding site" evidence="1">
    <location>
        <position position="387"/>
    </location>
    <ligand>
        <name>Zn(2+)</name>
        <dbReference type="ChEBI" id="CHEBI:29105"/>
        <label>2</label>
    </ligand>
</feature>
<feature type="binding site" evidence="1">
    <location>
        <position position="392"/>
    </location>
    <ligand>
        <name>Zn(2+)</name>
        <dbReference type="ChEBI" id="CHEBI:29105"/>
        <label>2</label>
    </ligand>
</feature>
<reference key="1">
    <citation type="journal article" date="1998" name="Science">
        <title>Genome sequence of the nematode C. elegans: a platform for investigating biology.</title>
        <authorList>
            <consortium name="The C. elegans sequencing consortium"/>
        </authorList>
    </citation>
    <scope>NUCLEOTIDE SEQUENCE [LARGE SCALE GENOMIC DNA]</scope>
    <source>
        <strain>Bristol N2</strain>
    </source>
</reference>
<reference key="2">
    <citation type="journal article" date="1995" name="Mol. Gen. Genet.">
        <title>Molecular cloning and characterization of the dpy-20 gene of Caenorhabditis elegans.</title>
        <authorList>
            <person name="Clark D.V."/>
            <person name="Suleman D.S."/>
            <person name="Beckenbach K.A."/>
            <person name="Gilchrist E.J."/>
            <person name="Baillie D.L."/>
        </authorList>
    </citation>
    <scope>NUCLEOTIDE SEQUENCE [GENOMIC DNA] OF 1-349</scope>
    <scope>FUNCTION</scope>
    <scope>DEVELOPMENTAL STAGE</scope>
</reference>
<accession>P34807</accession>
<gene>
    <name type="primary">dpy-20</name>
    <name type="ORF">T22B3.1</name>
</gene>
<sequence>MEGHSNTSVILHTYQQQQPQQLISSIIPQTLSDGYGISAPISQADCSGNSNFVNTNPWNNTTFQAYQTDAQFTNEISVLNYPNVYDDFSKESSNGILSDPSLHGSNSSSSTSDVGSSVDCSISPEPILMPSVKRGRPTENPCWAYFHRIDDQLVKCRLCTKVVRSACATNMTKHLERHHADDYQKVTGQLKLFRMNDVGIRSKMHYEVADNPLSTLPVVTNSYILPKMEPMDTFDPSQYYGMQQDPTLNQQQFIQFEQPQASIDPQTWPLTHFWQNTAQTNIMSHLGEASTSTLGSSVIQEAHKMNPDSNDKSFQLDLEQQNCVIIEQKLDDKPRVTKPTTKPYQKRNRKTEHPVWAFFKRTGDGNAECIICQGVVKSPCSSNFMRHLMRHHSTEYNDVYLKWIEKRNITHPGIHCTSVPPPAFINNETSRTEQTTFSVK</sequence>
<keyword id="KW-0479">Metal-binding</keyword>
<keyword id="KW-1185">Reference proteome</keyword>
<keyword id="KW-0677">Repeat</keyword>
<keyword id="KW-0862">Zinc</keyword>
<keyword id="KW-0863">Zinc-finger</keyword>